<accession>Q5L9L6</accession>
<keyword id="KW-0963">Cytoplasm</keyword>
<keyword id="KW-0489">Methyltransferase</keyword>
<keyword id="KW-0545">Nucleotide biosynthesis</keyword>
<keyword id="KW-0808">Transferase</keyword>
<protein>
    <recommendedName>
        <fullName evidence="1">Thymidylate synthase</fullName>
        <shortName evidence="1">TS</shortName>
        <shortName evidence="1">TSase</shortName>
        <ecNumber evidence="1">2.1.1.45</ecNumber>
    </recommendedName>
</protein>
<comment type="function">
    <text evidence="1">Catalyzes the reductive methylation of 2'-deoxyuridine-5'-monophosphate (dUMP) to 2'-deoxythymidine-5'-monophosphate (dTMP) while utilizing 5,10-methylenetetrahydrofolate (mTHF) as the methyl donor and reductant in the reaction, yielding dihydrofolate (DHF) as a by-product. This enzymatic reaction provides an intracellular de novo source of dTMP, an essential precursor for DNA biosynthesis.</text>
</comment>
<comment type="catalytic activity">
    <reaction evidence="1">
        <text>dUMP + (6R)-5,10-methylene-5,6,7,8-tetrahydrofolate = 7,8-dihydrofolate + dTMP</text>
        <dbReference type="Rhea" id="RHEA:12104"/>
        <dbReference type="ChEBI" id="CHEBI:15636"/>
        <dbReference type="ChEBI" id="CHEBI:57451"/>
        <dbReference type="ChEBI" id="CHEBI:63528"/>
        <dbReference type="ChEBI" id="CHEBI:246422"/>
        <dbReference type="EC" id="2.1.1.45"/>
    </reaction>
</comment>
<comment type="pathway">
    <text evidence="1">Pyrimidine metabolism; dTTP biosynthesis.</text>
</comment>
<comment type="subunit">
    <text evidence="1">Homodimer.</text>
</comment>
<comment type="subcellular location">
    <subcellularLocation>
        <location evidence="1">Cytoplasm</location>
    </subcellularLocation>
</comment>
<comment type="similarity">
    <text evidence="1">Belongs to the thymidylate synthase family. Bacterial-type ThyA subfamily.</text>
</comment>
<feature type="chain" id="PRO_1000000577" description="Thymidylate synthase">
    <location>
        <begin position="1"/>
        <end position="264"/>
    </location>
</feature>
<feature type="active site" description="Nucleophile" evidence="1">
    <location>
        <position position="146"/>
    </location>
</feature>
<feature type="binding site" description="in other chain" evidence="1">
    <location>
        <position position="21"/>
    </location>
    <ligand>
        <name>dUMP</name>
        <dbReference type="ChEBI" id="CHEBI:246422"/>
        <note>ligand shared between dimeric partners</note>
    </ligand>
</feature>
<feature type="binding site" evidence="1">
    <location>
        <position position="51"/>
    </location>
    <ligand>
        <name>(6R)-5,10-methylene-5,6,7,8-tetrahydrofolate</name>
        <dbReference type="ChEBI" id="CHEBI:15636"/>
    </ligand>
</feature>
<feature type="binding site" evidence="1">
    <location>
        <begin position="126"/>
        <end position="127"/>
    </location>
    <ligand>
        <name>dUMP</name>
        <dbReference type="ChEBI" id="CHEBI:246422"/>
        <note>ligand shared between dimeric partners</note>
    </ligand>
</feature>
<feature type="binding site" description="in other chain" evidence="1">
    <location>
        <begin position="166"/>
        <end position="169"/>
    </location>
    <ligand>
        <name>dUMP</name>
        <dbReference type="ChEBI" id="CHEBI:246422"/>
        <note>ligand shared between dimeric partners</note>
    </ligand>
</feature>
<feature type="binding site" evidence="1">
    <location>
        <position position="169"/>
    </location>
    <ligand>
        <name>(6R)-5,10-methylene-5,6,7,8-tetrahydrofolate</name>
        <dbReference type="ChEBI" id="CHEBI:15636"/>
    </ligand>
</feature>
<feature type="binding site" description="in other chain" evidence="1">
    <location>
        <position position="177"/>
    </location>
    <ligand>
        <name>dUMP</name>
        <dbReference type="ChEBI" id="CHEBI:246422"/>
        <note>ligand shared between dimeric partners</note>
    </ligand>
</feature>
<feature type="binding site" description="in other chain" evidence="1">
    <location>
        <begin position="207"/>
        <end position="209"/>
    </location>
    <ligand>
        <name>dUMP</name>
        <dbReference type="ChEBI" id="CHEBI:246422"/>
        <note>ligand shared between dimeric partners</note>
    </ligand>
</feature>
<feature type="binding site" evidence="1">
    <location>
        <position position="263"/>
    </location>
    <ligand>
        <name>(6R)-5,10-methylene-5,6,7,8-tetrahydrofolate</name>
        <dbReference type="ChEBI" id="CHEBI:15636"/>
    </ligand>
</feature>
<sequence>MKQYLDLLDRVLTEGIEKGDRTGTGTISVFGHQMRFNLDEGFPCLTTKKLHLKSIIYELLWFLKGDTNVKYLQDHGVRIWNEWADETGDLGHIYGYQWRSWPTYDGGFIDQISEAVDAIKHNPDSRRIIVSAWNVGDLDHMNLPPCHAFFQFYVANGRLSLQLYQRSADIFLGVPFNIASYALLLQMMAQVTGLQAGDFIHTLGDAHIYLNHLEQVKLQLSREPRPLPQMKINPDVKNIFDFQFEDFELVNYDPHPHIAGKVAV</sequence>
<dbReference type="EC" id="2.1.1.45" evidence="1"/>
<dbReference type="EMBL" id="CR626927">
    <property type="protein sequence ID" value="CAH09211.1"/>
    <property type="molecule type" value="Genomic_DNA"/>
</dbReference>
<dbReference type="RefSeq" id="WP_005797942.1">
    <property type="nucleotide sequence ID" value="NZ_UFTH01000001.1"/>
</dbReference>
<dbReference type="SMR" id="Q5L9L6"/>
<dbReference type="PaxDb" id="272559-BF9343_3430"/>
<dbReference type="KEGG" id="bfs:BF9343_3430"/>
<dbReference type="eggNOG" id="COG0207">
    <property type="taxonomic scope" value="Bacteria"/>
</dbReference>
<dbReference type="HOGENOM" id="CLU_021669_0_0_10"/>
<dbReference type="UniPathway" id="UPA00575"/>
<dbReference type="Proteomes" id="UP000006731">
    <property type="component" value="Chromosome"/>
</dbReference>
<dbReference type="GO" id="GO:0005829">
    <property type="term" value="C:cytosol"/>
    <property type="evidence" value="ECO:0007669"/>
    <property type="project" value="TreeGrafter"/>
</dbReference>
<dbReference type="GO" id="GO:0004799">
    <property type="term" value="F:thymidylate synthase activity"/>
    <property type="evidence" value="ECO:0007669"/>
    <property type="project" value="UniProtKB-UniRule"/>
</dbReference>
<dbReference type="GO" id="GO:0006231">
    <property type="term" value="P:dTMP biosynthetic process"/>
    <property type="evidence" value="ECO:0007669"/>
    <property type="project" value="UniProtKB-UniRule"/>
</dbReference>
<dbReference type="GO" id="GO:0006235">
    <property type="term" value="P:dTTP biosynthetic process"/>
    <property type="evidence" value="ECO:0007669"/>
    <property type="project" value="UniProtKB-UniRule"/>
</dbReference>
<dbReference type="GO" id="GO:0032259">
    <property type="term" value="P:methylation"/>
    <property type="evidence" value="ECO:0007669"/>
    <property type="project" value="UniProtKB-KW"/>
</dbReference>
<dbReference type="CDD" id="cd00351">
    <property type="entry name" value="TS_Pyrimidine_HMase"/>
    <property type="match status" value="1"/>
</dbReference>
<dbReference type="FunFam" id="3.30.572.10:FF:000001">
    <property type="entry name" value="Thymidylate synthase"/>
    <property type="match status" value="1"/>
</dbReference>
<dbReference type="Gene3D" id="3.30.572.10">
    <property type="entry name" value="Thymidylate synthase/dCMP hydroxymethylase domain"/>
    <property type="match status" value="1"/>
</dbReference>
<dbReference type="HAMAP" id="MF_00008">
    <property type="entry name" value="Thymidy_synth_bact"/>
    <property type="match status" value="1"/>
</dbReference>
<dbReference type="InterPro" id="IPR045097">
    <property type="entry name" value="Thymidate_synth/dCMP_Mease"/>
</dbReference>
<dbReference type="InterPro" id="IPR023451">
    <property type="entry name" value="Thymidate_synth/dCMP_Mease_dom"/>
</dbReference>
<dbReference type="InterPro" id="IPR036926">
    <property type="entry name" value="Thymidate_synth/dCMP_Mease_sf"/>
</dbReference>
<dbReference type="InterPro" id="IPR000398">
    <property type="entry name" value="Thymidylate_synthase"/>
</dbReference>
<dbReference type="InterPro" id="IPR020940">
    <property type="entry name" value="Thymidylate_synthase_AS"/>
</dbReference>
<dbReference type="NCBIfam" id="NF002497">
    <property type="entry name" value="PRK01827.1-3"/>
    <property type="match status" value="1"/>
</dbReference>
<dbReference type="NCBIfam" id="NF002499">
    <property type="entry name" value="PRK01827.1-5"/>
    <property type="match status" value="1"/>
</dbReference>
<dbReference type="NCBIfam" id="TIGR03284">
    <property type="entry name" value="thym_sym"/>
    <property type="match status" value="2"/>
</dbReference>
<dbReference type="PANTHER" id="PTHR11548:SF9">
    <property type="entry name" value="THYMIDYLATE SYNTHASE"/>
    <property type="match status" value="1"/>
</dbReference>
<dbReference type="PANTHER" id="PTHR11548">
    <property type="entry name" value="THYMIDYLATE SYNTHASE 1"/>
    <property type="match status" value="1"/>
</dbReference>
<dbReference type="Pfam" id="PF00303">
    <property type="entry name" value="Thymidylat_synt"/>
    <property type="match status" value="1"/>
</dbReference>
<dbReference type="PRINTS" id="PR00108">
    <property type="entry name" value="THYMDSNTHASE"/>
</dbReference>
<dbReference type="SUPFAM" id="SSF55831">
    <property type="entry name" value="Thymidylate synthase/dCMP hydroxymethylase"/>
    <property type="match status" value="1"/>
</dbReference>
<dbReference type="PROSITE" id="PS00091">
    <property type="entry name" value="THYMIDYLATE_SYNTHASE"/>
    <property type="match status" value="1"/>
</dbReference>
<name>TYSY_BACFN</name>
<proteinExistence type="inferred from homology"/>
<evidence type="ECO:0000255" key="1">
    <source>
        <dbReference type="HAMAP-Rule" id="MF_00008"/>
    </source>
</evidence>
<organism>
    <name type="scientific">Bacteroides fragilis (strain ATCC 25285 / DSM 2151 / CCUG 4856 / JCM 11019 / LMG 10263 / NCTC 9343 / Onslow / VPI 2553 / EN-2)</name>
    <dbReference type="NCBI Taxonomy" id="272559"/>
    <lineage>
        <taxon>Bacteria</taxon>
        <taxon>Pseudomonadati</taxon>
        <taxon>Bacteroidota</taxon>
        <taxon>Bacteroidia</taxon>
        <taxon>Bacteroidales</taxon>
        <taxon>Bacteroidaceae</taxon>
        <taxon>Bacteroides</taxon>
    </lineage>
</organism>
<gene>
    <name evidence="1" type="primary">thyA</name>
    <name type="ordered locus">BF3523</name>
</gene>
<reference key="1">
    <citation type="journal article" date="2005" name="Science">
        <title>Extensive DNA inversions in the B. fragilis genome control variable gene expression.</title>
        <authorList>
            <person name="Cerdeno-Tarraga A.-M."/>
            <person name="Patrick S."/>
            <person name="Crossman L.C."/>
            <person name="Blakely G."/>
            <person name="Abratt V."/>
            <person name="Lennard N."/>
            <person name="Poxton I."/>
            <person name="Duerden B."/>
            <person name="Harris B."/>
            <person name="Quail M.A."/>
            <person name="Barron A."/>
            <person name="Clark L."/>
            <person name="Corton C."/>
            <person name="Doggett J."/>
            <person name="Holden M.T.G."/>
            <person name="Larke N."/>
            <person name="Line A."/>
            <person name="Lord A."/>
            <person name="Norbertczak H."/>
            <person name="Ormond D."/>
            <person name="Price C."/>
            <person name="Rabbinowitsch E."/>
            <person name="Woodward J."/>
            <person name="Barrell B.G."/>
            <person name="Parkhill J."/>
        </authorList>
    </citation>
    <scope>NUCLEOTIDE SEQUENCE [LARGE SCALE GENOMIC DNA]</scope>
    <source>
        <strain>ATCC 25285 / DSM 2151 / CCUG 4856 / JCM 11019 / LMG 10263 / NCTC 9343 / Onslow / VPI 2553 / EN-2</strain>
    </source>
</reference>